<name>RS9_SORC5</name>
<sequence length="130" mass="14773">MTETRTYATGKRKTAVARVFLSPGTGNIKVNQRPADDYFVRETSRMVMRQSLELLELLDQFDVSATVVGGGHSAQAEAMRHGIARALCELDPERRPSLKRAGFLTRDARKKERKKYGQPGARKRFQYSKR</sequence>
<keyword id="KW-1185">Reference proteome</keyword>
<keyword id="KW-0687">Ribonucleoprotein</keyword>
<keyword id="KW-0689">Ribosomal protein</keyword>
<protein>
    <recommendedName>
        <fullName evidence="1">Small ribosomal subunit protein uS9</fullName>
    </recommendedName>
    <alternativeName>
        <fullName evidence="3">30S ribosomal protein S9</fullName>
    </alternativeName>
</protein>
<gene>
    <name evidence="1" type="primary">rpsI</name>
    <name type="ordered locus">sce7404</name>
</gene>
<organism>
    <name type="scientific">Sorangium cellulosum (strain So ce56)</name>
    <name type="common">Polyangium cellulosum (strain So ce56)</name>
    <dbReference type="NCBI Taxonomy" id="448385"/>
    <lineage>
        <taxon>Bacteria</taxon>
        <taxon>Pseudomonadati</taxon>
        <taxon>Myxococcota</taxon>
        <taxon>Polyangia</taxon>
        <taxon>Polyangiales</taxon>
        <taxon>Polyangiaceae</taxon>
        <taxon>Sorangium</taxon>
    </lineage>
</organism>
<feature type="chain" id="PRO_1000081837" description="Small ribosomal subunit protein uS9">
    <location>
        <begin position="1"/>
        <end position="130"/>
    </location>
</feature>
<feature type="region of interest" description="Disordered" evidence="2">
    <location>
        <begin position="98"/>
        <end position="130"/>
    </location>
</feature>
<feature type="compositionally biased region" description="Basic residues" evidence="2">
    <location>
        <begin position="111"/>
        <end position="130"/>
    </location>
</feature>
<proteinExistence type="inferred from homology"/>
<accession>A9EYT5</accession>
<dbReference type="EMBL" id="AM746676">
    <property type="protein sequence ID" value="CAN97573.1"/>
    <property type="molecule type" value="Genomic_DNA"/>
</dbReference>
<dbReference type="RefSeq" id="WP_012240012.1">
    <property type="nucleotide sequence ID" value="NC_010162.1"/>
</dbReference>
<dbReference type="SMR" id="A9EYT5"/>
<dbReference type="STRING" id="448385.sce7404"/>
<dbReference type="KEGG" id="scl:sce7404"/>
<dbReference type="eggNOG" id="COG0103">
    <property type="taxonomic scope" value="Bacteria"/>
</dbReference>
<dbReference type="HOGENOM" id="CLU_046483_2_1_7"/>
<dbReference type="OrthoDB" id="9803965at2"/>
<dbReference type="BioCyc" id="SCEL448385:SCE_RS37910-MONOMER"/>
<dbReference type="Proteomes" id="UP000002139">
    <property type="component" value="Chromosome"/>
</dbReference>
<dbReference type="GO" id="GO:0005737">
    <property type="term" value="C:cytoplasm"/>
    <property type="evidence" value="ECO:0007669"/>
    <property type="project" value="UniProtKB-ARBA"/>
</dbReference>
<dbReference type="GO" id="GO:0015935">
    <property type="term" value="C:small ribosomal subunit"/>
    <property type="evidence" value="ECO:0007669"/>
    <property type="project" value="TreeGrafter"/>
</dbReference>
<dbReference type="GO" id="GO:0003723">
    <property type="term" value="F:RNA binding"/>
    <property type="evidence" value="ECO:0007669"/>
    <property type="project" value="TreeGrafter"/>
</dbReference>
<dbReference type="GO" id="GO:0003735">
    <property type="term" value="F:structural constituent of ribosome"/>
    <property type="evidence" value="ECO:0007669"/>
    <property type="project" value="InterPro"/>
</dbReference>
<dbReference type="GO" id="GO:0006412">
    <property type="term" value="P:translation"/>
    <property type="evidence" value="ECO:0007669"/>
    <property type="project" value="UniProtKB-UniRule"/>
</dbReference>
<dbReference type="FunFam" id="3.30.230.10:FF:000001">
    <property type="entry name" value="30S ribosomal protein S9"/>
    <property type="match status" value="1"/>
</dbReference>
<dbReference type="Gene3D" id="3.30.230.10">
    <property type="match status" value="1"/>
</dbReference>
<dbReference type="HAMAP" id="MF_00532_B">
    <property type="entry name" value="Ribosomal_uS9_B"/>
    <property type="match status" value="1"/>
</dbReference>
<dbReference type="InterPro" id="IPR020568">
    <property type="entry name" value="Ribosomal_Su5_D2-typ_SF"/>
</dbReference>
<dbReference type="InterPro" id="IPR000754">
    <property type="entry name" value="Ribosomal_uS9"/>
</dbReference>
<dbReference type="InterPro" id="IPR023035">
    <property type="entry name" value="Ribosomal_uS9_bac/plastid"/>
</dbReference>
<dbReference type="InterPro" id="IPR020574">
    <property type="entry name" value="Ribosomal_uS9_CS"/>
</dbReference>
<dbReference type="InterPro" id="IPR014721">
    <property type="entry name" value="Ribsml_uS5_D2-typ_fold_subgr"/>
</dbReference>
<dbReference type="NCBIfam" id="NF001099">
    <property type="entry name" value="PRK00132.1"/>
    <property type="match status" value="1"/>
</dbReference>
<dbReference type="PANTHER" id="PTHR21569">
    <property type="entry name" value="RIBOSOMAL PROTEIN S9"/>
    <property type="match status" value="1"/>
</dbReference>
<dbReference type="PANTHER" id="PTHR21569:SF1">
    <property type="entry name" value="SMALL RIBOSOMAL SUBUNIT PROTEIN US9M"/>
    <property type="match status" value="1"/>
</dbReference>
<dbReference type="Pfam" id="PF00380">
    <property type="entry name" value="Ribosomal_S9"/>
    <property type="match status" value="1"/>
</dbReference>
<dbReference type="SUPFAM" id="SSF54211">
    <property type="entry name" value="Ribosomal protein S5 domain 2-like"/>
    <property type="match status" value="1"/>
</dbReference>
<dbReference type="PROSITE" id="PS00360">
    <property type="entry name" value="RIBOSOMAL_S9"/>
    <property type="match status" value="1"/>
</dbReference>
<evidence type="ECO:0000255" key="1">
    <source>
        <dbReference type="HAMAP-Rule" id="MF_00532"/>
    </source>
</evidence>
<evidence type="ECO:0000256" key="2">
    <source>
        <dbReference type="SAM" id="MobiDB-lite"/>
    </source>
</evidence>
<evidence type="ECO:0000305" key="3"/>
<comment type="similarity">
    <text evidence="1">Belongs to the universal ribosomal protein uS9 family.</text>
</comment>
<reference key="1">
    <citation type="journal article" date="2007" name="Nat. Biotechnol.">
        <title>Complete genome sequence of the myxobacterium Sorangium cellulosum.</title>
        <authorList>
            <person name="Schneiker S."/>
            <person name="Perlova O."/>
            <person name="Kaiser O."/>
            <person name="Gerth K."/>
            <person name="Alici A."/>
            <person name="Altmeyer M.O."/>
            <person name="Bartels D."/>
            <person name="Bekel T."/>
            <person name="Beyer S."/>
            <person name="Bode E."/>
            <person name="Bode H.B."/>
            <person name="Bolten C.J."/>
            <person name="Choudhuri J.V."/>
            <person name="Doss S."/>
            <person name="Elnakady Y.A."/>
            <person name="Frank B."/>
            <person name="Gaigalat L."/>
            <person name="Goesmann A."/>
            <person name="Groeger C."/>
            <person name="Gross F."/>
            <person name="Jelsbak L."/>
            <person name="Jelsbak L."/>
            <person name="Kalinowski J."/>
            <person name="Kegler C."/>
            <person name="Knauber T."/>
            <person name="Konietzny S."/>
            <person name="Kopp M."/>
            <person name="Krause L."/>
            <person name="Krug D."/>
            <person name="Linke B."/>
            <person name="Mahmud T."/>
            <person name="Martinez-Arias R."/>
            <person name="McHardy A.C."/>
            <person name="Merai M."/>
            <person name="Meyer F."/>
            <person name="Mormann S."/>
            <person name="Munoz-Dorado J."/>
            <person name="Perez J."/>
            <person name="Pradella S."/>
            <person name="Rachid S."/>
            <person name="Raddatz G."/>
            <person name="Rosenau F."/>
            <person name="Rueckert C."/>
            <person name="Sasse F."/>
            <person name="Scharfe M."/>
            <person name="Schuster S.C."/>
            <person name="Suen G."/>
            <person name="Treuner-Lange A."/>
            <person name="Velicer G.J."/>
            <person name="Vorholter F.-J."/>
            <person name="Weissman K.J."/>
            <person name="Welch R.D."/>
            <person name="Wenzel S.C."/>
            <person name="Whitworth D.E."/>
            <person name="Wilhelm S."/>
            <person name="Wittmann C."/>
            <person name="Bloecker H."/>
            <person name="Puehler A."/>
            <person name="Mueller R."/>
        </authorList>
    </citation>
    <scope>NUCLEOTIDE SEQUENCE [LARGE SCALE GENOMIC DNA]</scope>
    <source>
        <strain>So ce56</strain>
    </source>
</reference>